<dbReference type="EC" id="2.4.2.26" evidence="1"/>
<dbReference type="EMBL" id="AJ866726">
    <property type="protein sequence ID" value="CAI29053.1"/>
    <property type="molecule type" value="mRNA"/>
</dbReference>
<dbReference type="RefSeq" id="NP_001008667.1">
    <property type="nucleotide sequence ID" value="NM_001008667.1"/>
</dbReference>
<dbReference type="SMR" id="Q5QQ49"/>
<dbReference type="FunCoup" id="Q5QQ49">
    <property type="interactions" value="526"/>
</dbReference>
<dbReference type="STRING" id="9913.ENSBTAP00000063295"/>
<dbReference type="CAZy" id="GT14">
    <property type="family name" value="Glycosyltransferase Family 14"/>
</dbReference>
<dbReference type="GlyCosmos" id="Q5QQ49">
    <property type="glycosylation" value="3 sites, No reported glycans"/>
</dbReference>
<dbReference type="GlyGen" id="Q5QQ49">
    <property type="glycosylation" value="3 sites"/>
</dbReference>
<dbReference type="PaxDb" id="9913-ENSBTAP00000012247"/>
<dbReference type="GeneID" id="493989"/>
<dbReference type="KEGG" id="bta:493989"/>
<dbReference type="CTD" id="64132"/>
<dbReference type="eggNOG" id="KOG0799">
    <property type="taxonomic scope" value="Eukaryota"/>
</dbReference>
<dbReference type="InParanoid" id="Q5QQ49"/>
<dbReference type="OrthoDB" id="2019572at2759"/>
<dbReference type="UniPathway" id="UPA00755"/>
<dbReference type="UniPathway" id="UPA00756"/>
<dbReference type="Proteomes" id="UP000009136">
    <property type="component" value="Unplaced"/>
</dbReference>
<dbReference type="GO" id="GO:0005615">
    <property type="term" value="C:extracellular space"/>
    <property type="evidence" value="ECO:0000250"/>
    <property type="project" value="UniProtKB"/>
</dbReference>
<dbReference type="GO" id="GO:0000139">
    <property type="term" value="C:Golgi membrane"/>
    <property type="evidence" value="ECO:0007669"/>
    <property type="project" value="UniProtKB-SubCell"/>
</dbReference>
<dbReference type="GO" id="GO:0000287">
    <property type="term" value="F:magnesium ion binding"/>
    <property type="evidence" value="ECO:0000250"/>
    <property type="project" value="UniProtKB"/>
</dbReference>
<dbReference type="GO" id="GO:0030145">
    <property type="term" value="F:manganese ion binding"/>
    <property type="evidence" value="ECO:0000250"/>
    <property type="project" value="UniProtKB"/>
</dbReference>
<dbReference type="GO" id="GO:0030158">
    <property type="term" value="F:protein xylosyltransferase activity"/>
    <property type="evidence" value="ECO:0000250"/>
    <property type="project" value="UniProtKB"/>
</dbReference>
<dbReference type="GO" id="GO:0050650">
    <property type="term" value="P:chondroitin sulfate proteoglycan biosynthetic process"/>
    <property type="evidence" value="ECO:0000250"/>
    <property type="project" value="UniProtKB"/>
</dbReference>
<dbReference type="GO" id="GO:0015012">
    <property type="term" value="P:heparan sulfate proteoglycan biosynthetic process"/>
    <property type="evidence" value="ECO:0000250"/>
    <property type="project" value="UniProtKB"/>
</dbReference>
<dbReference type="InterPro" id="IPR003406">
    <property type="entry name" value="Glyco_trans_14"/>
</dbReference>
<dbReference type="InterPro" id="IPR043538">
    <property type="entry name" value="XYLT"/>
</dbReference>
<dbReference type="InterPro" id="IPR024448">
    <property type="entry name" value="XylT_C"/>
</dbReference>
<dbReference type="PANTHER" id="PTHR46025:SF1">
    <property type="entry name" value="XYLOSYLTRANSFERASE 2"/>
    <property type="match status" value="1"/>
</dbReference>
<dbReference type="PANTHER" id="PTHR46025">
    <property type="entry name" value="XYLOSYLTRANSFERASE OXT"/>
    <property type="match status" value="1"/>
</dbReference>
<dbReference type="Pfam" id="PF02485">
    <property type="entry name" value="Branch"/>
    <property type="match status" value="1"/>
</dbReference>
<dbReference type="Pfam" id="PF12529">
    <property type="entry name" value="Xylo_C"/>
    <property type="match status" value="1"/>
</dbReference>
<evidence type="ECO:0000250" key="1">
    <source>
        <dbReference type="UniProtKB" id="Q86Y38"/>
    </source>
</evidence>
<evidence type="ECO:0000250" key="2">
    <source>
        <dbReference type="UniProtKB" id="Q9EPL0"/>
    </source>
</evidence>
<evidence type="ECO:0000250" key="3">
    <source>
        <dbReference type="UniProtKB" id="Q9H1B5"/>
    </source>
</evidence>
<evidence type="ECO:0000255" key="4"/>
<evidence type="ECO:0000256" key="5">
    <source>
        <dbReference type="SAM" id="MobiDB-lite"/>
    </source>
</evidence>
<evidence type="ECO:0000305" key="6"/>
<comment type="function">
    <text evidence="2 3">Catalyzes the first step in the biosynthesis of chondroitin sulfate, heparan sulfate and dermatan sulfate proteoglycans, such as DCN (By similarity). Transfers D-xylose from UDP-D-xylose to specific serine residues of the core protein (By similarity).</text>
</comment>
<comment type="catalytic activity">
    <reaction evidence="3">
        <text>UDP-alpha-D-xylose + L-seryl-[protein] = 3-O-(beta-D-xylosyl)-L-seryl-[protein] + UDP + H(+)</text>
        <dbReference type="Rhea" id="RHEA:50192"/>
        <dbReference type="Rhea" id="RHEA-COMP:9863"/>
        <dbReference type="Rhea" id="RHEA-COMP:12567"/>
        <dbReference type="ChEBI" id="CHEBI:15378"/>
        <dbReference type="ChEBI" id="CHEBI:29999"/>
        <dbReference type="ChEBI" id="CHEBI:57632"/>
        <dbReference type="ChEBI" id="CHEBI:58223"/>
        <dbReference type="ChEBI" id="CHEBI:132085"/>
        <dbReference type="EC" id="2.4.2.26"/>
    </reaction>
</comment>
<comment type="cofactor">
    <cofactor evidence="3">
        <name>Mg(2+)</name>
        <dbReference type="ChEBI" id="CHEBI:18420"/>
    </cofactor>
    <cofactor evidence="3">
        <name>Mn(2+)</name>
        <dbReference type="ChEBI" id="CHEBI:29035"/>
    </cofactor>
    <text evidence="3">Active with either Mg(2+) or Mn(2+), but activity is highest when both are present.</text>
</comment>
<comment type="pathway">
    <text evidence="3">Glycan metabolism; chondroitin sulfate biosynthesis.</text>
</comment>
<comment type="pathway">
    <text evidence="3">Glycan metabolism; heparan sulfate biosynthesis.</text>
</comment>
<comment type="subunit">
    <text evidence="1">Monomer.</text>
</comment>
<comment type="subcellular location">
    <subcellularLocation>
        <location evidence="3">Golgi apparatus membrane</location>
        <topology evidence="3">Single-pass type II membrane protein</topology>
    </subcellularLocation>
    <subcellularLocation>
        <location evidence="3">Secreted</location>
    </subcellularLocation>
</comment>
<comment type="PTM">
    <text evidence="1">Contains disulfide bonds.</text>
</comment>
<comment type="similarity">
    <text evidence="6">Belongs to the glycosyltransferase 14 family. XylT subfamily.</text>
</comment>
<reference key="1">
    <citation type="submission" date="2004-11" db="EMBL/GenBank/DDBJ databases">
        <title>Phylogeny of animal protein xylosyltransferases.</title>
        <authorList>
            <person name="Ouzzine M."/>
            <person name="Fournel-Gigleux S."/>
            <person name="Mollicone R."/>
            <person name="Oriol R."/>
        </authorList>
    </citation>
    <scope>NUCLEOTIDE SEQUENCE [MRNA]</scope>
</reference>
<gene>
    <name type="primary">XYLT2</name>
</gene>
<feature type="chain" id="PRO_0000191404" description="Xylosyltransferase 2">
    <location>
        <begin position="1"/>
        <end position="867"/>
    </location>
</feature>
<feature type="topological domain" description="Cytoplasmic" evidence="4">
    <location>
        <begin position="1"/>
        <end position="15"/>
    </location>
</feature>
<feature type="transmembrane region" description="Helical; Signal-anchor for type II membrane protein" evidence="4">
    <location>
        <begin position="16"/>
        <end position="36"/>
    </location>
</feature>
<feature type="topological domain" description="Lumenal" evidence="4">
    <location>
        <begin position="37"/>
        <end position="867"/>
    </location>
</feature>
<feature type="region of interest" description="Disordered" evidence="5">
    <location>
        <begin position="41"/>
        <end position="122"/>
    </location>
</feature>
<feature type="compositionally biased region" description="Basic and acidic residues" evidence="5">
    <location>
        <begin position="53"/>
        <end position="65"/>
    </location>
</feature>
<feature type="compositionally biased region" description="Basic residues" evidence="5">
    <location>
        <begin position="73"/>
        <end position="82"/>
    </location>
</feature>
<feature type="binding site" evidence="1">
    <location>
        <position position="238"/>
    </location>
    <ligand>
        <name>UDP-alpha-D-xylose</name>
        <dbReference type="ChEBI" id="CHEBI:57632"/>
    </ligand>
</feature>
<feature type="binding site" evidence="1">
    <location>
        <position position="266"/>
    </location>
    <ligand>
        <name>UDP-alpha-D-xylose</name>
        <dbReference type="ChEBI" id="CHEBI:57632"/>
    </ligand>
</feature>
<feature type="binding site" evidence="1">
    <location>
        <begin position="295"/>
        <end position="297"/>
    </location>
    <ligand>
        <name>UDP-alpha-D-xylose</name>
        <dbReference type="ChEBI" id="CHEBI:57632"/>
    </ligand>
</feature>
<feature type="binding site" evidence="1">
    <location>
        <begin position="399"/>
        <end position="400"/>
    </location>
    <ligand>
        <name>UDP-alpha-D-xylose</name>
        <dbReference type="ChEBI" id="CHEBI:57632"/>
    </ligand>
</feature>
<feature type="binding site" evidence="1">
    <location>
        <position position="480"/>
    </location>
    <ligand>
        <name>UDP-alpha-D-xylose</name>
        <dbReference type="ChEBI" id="CHEBI:57632"/>
    </ligand>
</feature>
<feature type="binding site" evidence="1">
    <location>
        <begin position="503"/>
        <end position="504"/>
    </location>
    <ligand>
        <name>UDP-alpha-D-xylose</name>
        <dbReference type="ChEBI" id="CHEBI:57632"/>
    </ligand>
</feature>
<feature type="glycosylation site" description="N-linked (GlcNAc...) asparagine" evidence="4">
    <location>
        <position position="122"/>
    </location>
</feature>
<feature type="glycosylation site" description="N-linked (GlcNAc...) asparagine" evidence="4">
    <location>
        <position position="326"/>
    </location>
</feature>
<feature type="glycosylation site" description="N-linked (GlcNAc...) asparagine" evidence="4">
    <location>
        <position position="685"/>
    </location>
</feature>
<feature type="disulfide bond" evidence="1">
    <location>
        <begin position="161"/>
        <end position="189"/>
    </location>
</feature>
<feature type="disulfide bond" evidence="1">
    <location>
        <begin position="205"/>
        <end position="447"/>
    </location>
</feature>
<feature type="disulfide bond" evidence="1">
    <location>
        <begin position="580"/>
        <end position="835"/>
    </location>
</feature>
<feature type="disulfide bond" evidence="1">
    <location>
        <begin position="828"/>
        <end position="841"/>
    </location>
</feature>
<proteinExistence type="evidence at transcript level"/>
<protein>
    <recommendedName>
        <fullName>Xylosyltransferase 2</fullName>
        <ecNumber evidence="1">2.4.2.26</ecNumber>
    </recommendedName>
    <alternativeName>
        <fullName>Peptide O-xylosyltransferase 2</fullName>
    </alternativeName>
    <alternativeName>
        <fullName>Xylosyltransferase II</fullName>
    </alternativeName>
</protein>
<accession>Q5QQ49</accession>
<organism>
    <name type="scientific">Bos taurus</name>
    <name type="common">Bovine</name>
    <dbReference type="NCBI Taxonomy" id="9913"/>
    <lineage>
        <taxon>Eukaryota</taxon>
        <taxon>Metazoa</taxon>
        <taxon>Chordata</taxon>
        <taxon>Craniata</taxon>
        <taxon>Vertebrata</taxon>
        <taxon>Euteleostomi</taxon>
        <taxon>Mammalia</taxon>
        <taxon>Eutheria</taxon>
        <taxon>Laurasiatheria</taxon>
        <taxon>Artiodactyla</taxon>
        <taxon>Ruminantia</taxon>
        <taxon>Pecora</taxon>
        <taxon>Bovidae</taxon>
        <taxon>Bovinae</taxon>
        <taxon>Bos</taxon>
    </lineage>
</organism>
<keyword id="KW-1015">Disulfide bond</keyword>
<keyword id="KW-0325">Glycoprotein</keyword>
<keyword id="KW-0328">Glycosyltransferase</keyword>
<keyword id="KW-0333">Golgi apparatus</keyword>
<keyword id="KW-0460">Magnesium</keyword>
<keyword id="KW-0464">Manganese</keyword>
<keyword id="KW-0472">Membrane</keyword>
<keyword id="KW-0479">Metal-binding</keyword>
<keyword id="KW-1185">Reference proteome</keyword>
<keyword id="KW-0964">Secreted</keyword>
<keyword id="KW-0735">Signal-anchor</keyword>
<keyword id="KW-0808">Transferase</keyword>
<keyword id="KW-0812">Transmembrane</keyword>
<keyword id="KW-1133">Transmembrane helix</keyword>
<sequence length="867" mass="97189">MVASARVQKLVRRYKLAIATALAILLLQGLVVWSFSVLEDDEPGEKGRQKKSRPLDPSEGSKDTDSSAGRRGSAGRRHGRWRGRAESPGVPVAKVVRAVTSRHRTGRRIPPTPPPEAPGRQNLSGAAAEEALVGAAGFPHGDTGSVEGAPQPTDNSFTPKCEIVGKDALSALARASSKQCQQEIANVVCLHQAGSLMPKAVPRHCQRAGKMSPGIPWDEVRAQQPADGPPVRIAYMLVVHGRAIRQLKRLLKAVYHKQHFFYVHVDERSNYLHREVVELARQYDNVRVTPWRMVTIWGGASLLRMYLRSMQDLLEVPGWAWDFFINLSATDYPTRTNEELVAFLSKNRDKNFLKSHGRDNSRFIKKQGLDRLFHECDSHMWRLGERQIPAGIVVDGGSDWFVLTRSFVEYVVYTDDPLVAQLRQFYTYTLLPAESFFHTVLEISPACESLVDNNMRVTTWNRKMGSKSQYKHIVDWCGCSPNDFKPQDFLRLQQTARPTFFARKFEAVVNQEIIGQLDYYLYGNYPAGTPGLRSYWENVYDEPDGIHSLSDVTLTLYHSFSRLGLRRAEASLRAPGESSCRFEPRGLPSSVHLYFYDDHFQGYLVTQAVQSSAQGPAETLEMWLMPQGSLKLLGHSDQASRLQSLEVGQVGTEWDPKERLFRNFGGLLGPLDEPVAMQRWARGPNLTVTVVWIDPTYVVATSYDIVVDAETEVTQYKPPLSRPLRPGAWTVRLLQFWEPLGETRFLVLPLTFNRKLPLRKGKFSQMIAGPPHNEYMEQSFQGLSGILNLPQLEPAEEAARLHAELTGPALEAWTDGEQSSFWSVAGVCAVGPSACPSLELCRLTSWSSLSPDPKSELGPVKADGRLR</sequence>
<name>XYLT2_BOVIN</name>